<feature type="chain" id="PRO_1000095317" description="Aspartyl/glutamyl-tRNA(Asn/Gln) amidotransferase subunit C">
    <location>
        <begin position="1"/>
        <end position="100"/>
    </location>
</feature>
<sequence length="100" mass="11072">MKITQEEVTHVANLSKLRFSEEETAAFATTLSKIVDMVELLGEVDTTGVAPTTTMADRKTVLRPDVVEEGTDRDRLFKNVPEQDNYYIKVPAILDDGGDA</sequence>
<protein>
    <recommendedName>
        <fullName evidence="1">Aspartyl/glutamyl-tRNA(Asn/Gln) amidotransferase subunit C</fullName>
        <shortName evidence="1">Asp/Glu-ADT subunit C</shortName>
        <ecNumber evidence="1">6.3.5.-</ecNumber>
    </recommendedName>
</protein>
<comment type="function">
    <text evidence="1">Allows the formation of correctly charged Asn-tRNA(Asn) or Gln-tRNA(Gln) through the transamidation of misacylated Asp-tRNA(Asn) or Glu-tRNA(Gln) in organisms which lack either or both of asparaginyl-tRNA or glutaminyl-tRNA synthetases. The reaction takes place in the presence of glutamine and ATP through an activated phospho-Asp-tRNA(Asn) or phospho-Glu-tRNA(Gln).</text>
</comment>
<comment type="catalytic activity">
    <reaction evidence="1">
        <text>L-glutamyl-tRNA(Gln) + L-glutamine + ATP + H2O = L-glutaminyl-tRNA(Gln) + L-glutamate + ADP + phosphate + H(+)</text>
        <dbReference type="Rhea" id="RHEA:17521"/>
        <dbReference type="Rhea" id="RHEA-COMP:9681"/>
        <dbReference type="Rhea" id="RHEA-COMP:9684"/>
        <dbReference type="ChEBI" id="CHEBI:15377"/>
        <dbReference type="ChEBI" id="CHEBI:15378"/>
        <dbReference type="ChEBI" id="CHEBI:29985"/>
        <dbReference type="ChEBI" id="CHEBI:30616"/>
        <dbReference type="ChEBI" id="CHEBI:43474"/>
        <dbReference type="ChEBI" id="CHEBI:58359"/>
        <dbReference type="ChEBI" id="CHEBI:78520"/>
        <dbReference type="ChEBI" id="CHEBI:78521"/>
        <dbReference type="ChEBI" id="CHEBI:456216"/>
    </reaction>
</comment>
<comment type="catalytic activity">
    <reaction evidence="1">
        <text>L-aspartyl-tRNA(Asn) + L-glutamine + ATP + H2O = L-asparaginyl-tRNA(Asn) + L-glutamate + ADP + phosphate + 2 H(+)</text>
        <dbReference type="Rhea" id="RHEA:14513"/>
        <dbReference type="Rhea" id="RHEA-COMP:9674"/>
        <dbReference type="Rhea" id="RHEA-COMP:9677"/>
        <dbReference type="ChEBI" id="CHEBI:15377"/>
        <dbReference type="ChEBI" id="CHEBI:15378"/>
        <dbReference type="ChEBI" id="CHEBI:29985"/>
        <dbReference type="ChEBI" id="CHEBI:30616"/>
        <dbReference type="ChEBI" id="CHEBI:43474"/>
        <dbReference type="ChEBI" id="CHEBI:58359"/>
        <dbReference type="ChEBI" id="CHEBI:78515"/>
        <dbReference type="ChEBI" id="CHEBI:78516"/>
        <dbReference type="ChEBI" id="CHEBI:456216"/>
    </reaction>
</comment>
<comment type="subunit">
    <text evidence="1">Heterotrimer of A, B and C subunits.</text>
</comment>
<comment type="similarity">
    <text evidence="1">Belongs to the GatC family.</text>
</comment>
<name>GATC_STRPI</name>
<organism>
    <name type="scientific">Streptococcus pneumoniae (strain Hungary19A-6)</name>
    <dbReference type="NCBI Taxonomy" id="487214"/>
    <lineage>
        <taxon>Bacteria</taxon>
        <taxon>Bacillati</taxon>
        <taxon>Bacillota</taxon>
        <taxon>Bacilli</taxon>
        <taxon>Lactobacillales</taxon>
        <taxon>Streptococcaceae</taxon>
        <taxon>Streptococcus</taxon>
    </lineage>
</organism>
<dbReference type="EC" id="6.3.5.-" evidence="1"/>
<dbReference type="EMBL" id="CP000936">
    <property type="protein sequence ID" value="ACA36179.1"/>
    <property type="molecule type" value="Genomic_DNA"/>
</dbReference>
<dbReference type="RefSeq" id="WP_000705428.1">
    <property type="nucleotide sequence ID" value="NC_010380.1"/>
</dbReference>
<dbReference type="SMR" id="B1I9M9"/>
<dbReference type="KEGG" id="spv:SPH_0544"/>
<dbReference type="HOGENOM" id="CLU_105899_1_2_9"/>
<dbReference type="Proteomes" id="UP000002163">
    <property type="component" value="Chromosome"/>
</dbReference>
<dbReference type="GO" id="GO:0050566">
    <property type="term" value="F:asparaginyl-tRNA synthase (glutamine-hydrolyzing) activity"/>
    <property type="evidence" value="ECO:0007669"/>
    <property type="project" value="RHEA"/>
</dbReference>
<dbReference type="GO" id="GO:0005524">
    <property type="term" value="F:ATP binding"/>
    <property type="evidence" value="ECO:0007669"/>
    <property type="project" value="UniProtKB-KW"/>
</dbReference>
<dbReference type="GO" id="GO:0050567">
    <property type="term" value="F:glutaminyl-tRNA synthase (glutamine-hydrolyzing) activity"/>
    <property type="evidence" value="ECO:0007669"/>
    <property type="project" value="UniProtKB-UniRule"/>
</dbReference>
<dbReference type="GO" id="GO:0070681">
    <property type="term" value="P:glutaminyl-tRNAGln biosynthesis via transamidation"/>
    <property type="evidence" value="ECO:0007669"/>
    <property type="project" value="TreeGrafter"/>
</dbReference>
<dbReference type="GO" id="GO:0006450">
    <property type="term" value="P:regulation of translational fidelity"/>
    <property type="evidence" value="ECO:0007669"/>
    <property type="project" value="InterPro"/>
</dbReference>
<dbReference type="GO" id="GO:0006412">
    <property type="term" value="P:translation"/>
    <property type="evidence" value="ECO:0007669"/>
    <property type="project" value="UniProtKB-UniRule"/>
</dbReference>
<dbReference type="Gene3D" id="1.10.20.60">
    <property type="entry name" value="Glu-tRNAGln amidotransferase C subunit, N-terminal domain"/>
    <property type="match status" value="1"/>
</dbReference>
<dbReference type="HAMAP" id="MF_00122">
    <property type="entry name" value="GatC"/>
    <property type="match status" value="1"/>
</dbReference>
<dbReference type="InterPro" id="IPR036113">
    <property type="entry name" value="Asp/Glu-ADT_sf_sub_c"/>
</dbReference>
<dbReference type="InterPro" id="IPR003837">
    <property type="entry name" value="GatC"/>
</dbReference>
<dbReference type="NCBIfam" id="TIGR00135">
    <property type="entry name" value="gatC"/>
    <property type="match status" value="1"/>
</dbReference>
<dbReference type="PANTHER" id="PTHR15004">
    <property type="entry name" value="GLUTAMYL-TRNA(GLN) AMIDOTRANSFERASE SUBUNIT C, MITOCHONDRIAL"/>
    <property type="match status" value="1"/>
</dbReference>
<dbReference type="PANTHER" id="PTHR15004:SF0">
    <property type="entry name" value="GLUTAMYL-TRNA(GLN) AMIDOTRANSFERASE SUBUNIT C, MITOCHONDRIAL"/>
    <property type="match status" value="1"/>
</dbReference>
<dbReference type="Pfam" id="PF02686">
    <property type="entry name" value="GatC"/>
    <property type="match status" value="1"/>
</dbReference>
<dbReference type="SUPFAM" id="SSF141000">
    <property type="entry name" value="Glu-tRNAGln amidotransferase C subunit"/>
    <property type="match status" value="1"/>
</dbReference>
<proteinExistence type="inferred from homology"/>
<evidence type="ECO:0000255" key="1">
    <source>
        <dbReference type="HAMAP-Rule" id="MF_00122"/>
    </source>
</evidence>
<keyword id="KW-0067">ATP-binding</keyword>
<keyword id="KW-0436">Ligase</keyword>
<keyword id="KW-0547">Nucleotide-binding</keyword>
<keyword id="KW-0648">Protein biosynthesis</keyword>
<reference key="1">
    <citation type="journal article" date="2010" name="Genome Biol.">
        <title>Structure and dynamics of the pan-genome of Streptococcus pneumoniae and closely related species.</title>
        <authorList>
            <person name="Donati C."/>
            <person name="Hiller N.L."/>
            <person name="Tettelin H."/>
            <person name="Muzzi A."/>
            <person name="Croucher N.J."/>
            <person name="Angiuoli S.V."/>
            <person name="Oggioni M."/>
            <person name="Dunning Hotopp J.C."/>
            <person name="Hu F.Z."/>
            <person name="Riley D.R."/>
            <person name="Covacci A."/>
            <person name="Mitchell T.J."/>
            <person name="Bentley S.D."/>
            <person name="Kilian M."/>
            <person name="Ehrlich G.D."/>
            <person name="Rappuoli R."/>
            <person name="Moxon E.R."/>
            <person name="Masignani V."/>
        </authorList>
    </citation>
    <scope>NUCLEOTIDE SEQUENCE [LARGE SCALE GENOMIC DNA]</scope>
    <source>
        <strain>Hungary19A-6</strain>
    </source>
</reference>
<gene>
    <name evidence="1" type="primary">gatC</name>
    <name type="ordered locus">SPH_0544</name>
</gene>
<accession>B1I9M9</accession>